<keyword id="KW-0066">ATP synthesis</keyword>
<keyword id="KW-0067">ATP-binding</keyword>
<keyword id="KW-0997">Cell inner membrane</keyword>
<keyword id="KW-1003">Cell membrane</keyword>
<keyword id="KW-0139">CF(1)</keyword>
<keyword id="KW-0375">Hydrogen ion transport</keyword>
<keyword id="KW-0406">Ion transport</keyword>
<keyword id="KW-0472">Membrane</keyword>
<keyword id="KW-0547">Nucleotide-binding</keyword>
<keyword id="KW-1278">Translocase</keyword>
<keyword id="KW-0813">Transport</keyword>
<feature type="chain" id="PRO_0000339579" description="ATP synthase subunit beta 1">
    <location>
        <begin position="1"/>
        <end position="475"/>
    </location>
</feature>
<feature type="binding site" evidence="1">
    <location>
        <begin position="152"/>
        <end position="159"/>
    </location>
    <ligand>
        <name>ATP</name>
        <dbReference type="ChEBI" id="CHEBI:30616"/>
    </ligand>
</feature>
<protein>
    <recommendedName>
        <fullName evidence="1">ATP synthase subunit beta 1</fullName>
        <ecNumber evidence="1">7.1.2.2</ecNumber>
    </recommendedName>
    <alternativeName>
        <fullName evidence="1">ATP synthase F1 sector subunit beta 1</fullName>
    </alternativeName>
    <alternativeName>
        <fullName evidence="1">F-ATPase subunit beta 1</fullName>
    </alternativeName>
</protein>
<name>ATPB1_CERS1</name>
<proteinExistence type="inferred from homology"/>
<accession>A3PIB9</accession>
<sequence>MATASQGKVTQVIGAVVDVQFDGGLPPILNALETENNGKRLVLEVAQHLGESTVRTIAMDATEGLVRGARVTDTGSPISVPVGDATLGRILNVIGEPIDEKGDLGEASTRAIHQPAPTFAEQSTTSEILVTGIKVIDLLAPYSKGGKIGLFGGAGVGKTVLIMELINNIAKVHSGYSVFAGVGERTREGNDLYHEMIESGVIKIDNLSESKVALVYGQMNEPPGARARVALTGLTLAEQFRDQSGTDVLFFVDNIFRFTQAGSEVSALLGRIPSAVGYQPTLATDMGALQERITSTKAGSITSVQAIYVPADDLTDPAPATSFAHLDATTVLSRAISELGIYPAVDPLDSTSRILDPQIVGEEHYNVARAVQGILQRYKSLQDIIAILGMDELSEEDKLSVARARKIQRFLSQPFDVAKVFTGSDGVQVPLEKTIASFKAVVNGEYDHLPEAAFYMVGDIEDVIAKAQRLAAQAA</sequence>
<comment type="function">
    <text evidence="1">Produces ATP from ADP in the presence of a proton gradient across the membrane. The catalytic sites are hosted primarily by the beta subunits.</text>
</comment>
<comment type="catalytic activity">
    <reaction evidence="1">
        <text>ATP + H2O + 4 H(+)(in) = ADP + phosphate + 5 H(+)(out)</text>
        <dbReference type="Rhea" id="RHEA:57720"/>
        <dbReference type="ChEBI" id="CHEBI:15377"/>
        <dbReference type="ChEBI" id="CHEBI:15378"/>
        <dbReference type="ChEBI" id="CHEBI:30616"/>
        <dbReference type="ChEBI" id="CHEBI:43474"/>
        <dbReference type="ChEBI" id="CHEBI:456216"/>
        <dbReference type="EC" id="7.1.2.2"/>
    </reaction>
</comment>
<comment type="subunit">
    <text evidence="1">F-type ATPases have 2 components, CF(1) - the catalytic core - and CF(0) - the membrane proton channel. CF(1) has five subunits: alpha(3), beta(3), gamma(1), delta(1), epsilon(1). CF(0) has four main subunits: a(1), b(1), b'(1) and c(9-12).</text>
</comment>
<comment type="subcellular location">
    <subcellularLocation>
        <location evidence="1">Cell inner membrane</location>
        <topology evidence="1">Peripheral membrane protein</topology>
    </subcellularLocation>
</comment>
<comment type="similarity">
    <text evidence="1">Belongs to the ATPase alpha/beta chains family.</text>
</comment>
<reference key="1">
    <citation type="submission" date="2007-02" db="EMBL/GenBank/DDBJ databases">
        <title>Complete sequence of chromosome 1 of Rhodobacter sphaeroides ATCC 17029.</title>
        <authorList>
            <person name="Copeland A."/>
            <person name="Lucas S."/>
            <person name="Lapidus A."/>
            <person name="Barry K."/>
            <person name="Detter J.C."/>
            <person name="Glavina del Rio T."/>
            <person name="Hammon N."/>
            <person name="Israni S."/>
            <person name="Dalin E."/>
            <person name="Tice H."/>
            <person name="Pitluck S."/>
            <person name="Kiss H."/>
            <person name="Brettin T."/>
            <person name="Bruce D."/>
            <person name="Han C."/>
            <person name="Tapia R."/>
            <person name="Gilna P."/>
            <person name="Schmutz J."/>
            <person name="Larimer F."/>
            <person name="Land M."/>
            <person name="Hauser L."/>
            <person name="Kyrpides N."/>
            <person name="Mikhailova N."/>
            <person name="Richardson P."/>
            <person name="Mackenzie C."/>
            <person name="Choudhary M."/>
            <person name="Donohue T.J."/>
            <person name="Kaplan S."/>
        </authorList>
    </citation>
    <scope>NUCLEOTIDE SEQUENCE [LARGE SCALE GENOMIC DNA]</scope>
    <source>
        <strain>ATCC 17029 / ATH 2.4.9</strain>
    </source>
</reference>
<dbReference type="EC" id="7.1.2.2" evidence="1"/>
<dbReference type="EMBL" id="CP000577">
    <property type="protein sequence ID" value="ABN76085.1"/>
    <property type="molecule type" value="Genomic_DNA"/>
</dbReference>
<dbReference type="SMR" id="A3PIB9"/>
<dbReference type="KEGG" id="rsh:Rsph17029_0974"/>
<dbReference type="HOGENOM" id="CLU_022398_0_2_5"/>
<dbReference type="GO" id="GO:0005886">
    <property type="term" value="C:plasma membrane"/>
    <property type="evidence" value="ECO:0007669"/>
    <property type="project" value="UniProtKB-SubCell"/>
</dbReference>
<dbReference type="GO" id="GO:0045259">
    <property type="term" value="C:proton-transporting ATP synthase complex"/>
    <property type="evidence" value="ECO:0007669"/>
    <property type="project" value="UniProtKB-KW"/>
</dbReference>
<dbReference type="GO" id="GO:0005524">
    <property type="term" value="F:ATP binding"/>
    <property type="evidence" value="ECO:0007669"/>
    <property type="project" value="UniProtKB-UniRule"/>
</dbReference>
<dbReference type="GO" id="GO:0016887">
    <property type="term" value="F:ATP hydrolysis activity"/>
    <property type="evidence" value="ECO:0007669"/>
    <property type="project" value="InterPro"/>
</dbReference>
<dbReference type="GO" id="GO:0046933">
    <property type="term" value="F:proton-transporting ATP synthase activity, rotational mechanism"/>
    <property type="evidence" value="ECO:0007669"/>
    <property type="project" value="UniProtKB-UniRule"/>
</dbReference>
<dbReference type="CDD" id="cd18110">
    <property type="entry name" value="ATP-synt_F1_beta_C"/>
    <property type="match status" value="1"/>
</dbReference>
<dbReference type="CDD" id="cd18115">
    <property type="entry name" value="ATP-synt_F1_beta_N"/>
    <property type="match status" value="1"/>
</dbReference>
<dbReference type="CDD" id="cd01133">
    <property type="entry name" value="F1-ATPase_beta_CD"/>
    <property type="match status" value="1"/>
</dbReference>
<dbReference type="FunFam" id="1.10.1140.10:FF:000001">
    <property type="entry name" value="ATP synthase subunit beta"/>
    <property type="match status" value="1"/>
</dbReference>
<dbReference type="FunFam" id="2.40.10.170:FF:000004">
    <property type="entry name" value="ATP synthase subunit beta"/>
    <property type="match status" value="1"/>
</dbReference>
<dbReference type="FunFam" id="3.40.50.300:FF:000026">
    <property type="entry name" value="ATP synthase subunit beta"/>
    <property type="match status" value="1"/>
</dbReference>
<dbReference type="Gene3D" id="2.40.10.170">
    <property type="match status" value="1"/>
</dbReference>
<dbReference type="Gene3D" id="1.10.1140.10">
    <property type="entry name" value="Bovine Mitochondrial F1-atpase, Atp Synthase Beta Chain, Chain D, domain 3"/>
    <property type="match status" value="1"/>
</dbReference>
<dbReference type="Gene3D" id="3.40.50.300">
    <property type="entry name" value="P-loop containing nucleotide triphosphate hydrolases"/>
    <property type="match status" value="1"/>
</dbReference>
<dbReference type="HAMAP" id="MF_01347">
    <property type="entry name" value="ATP_synth_beta_bact"/>
    <property type="match status" value="1"/>
</dbReference>
<dbReference type="InterPro" id="IPR003593">
    <property type="entry name" value="AAA+_ATPase"/>
</dbReference>
<dbReference type="InterPro" id="IPR055190">
    <property type="entry name" value="ATP-synt_VA_C"/>
</dbReference>
<dbReference type="InterPro" id="IPR005722">
    <property type="entry name" value="ATP_synth_F1_bsu"/>
</dbReference>
<dbReference type="InterPro" id="IPR020003">
    <property type="entry name" value="ATPase_a/bsu_AS"/>
</dbReference>
<dbReference type="InterPro" id="IPR050053">
    <property type="entry name" value="ATPase_alpha/beta_chains"/>
</dbReference>
<dbReference type="InterPro" id="IPR004100">
    <property type="entry name" value="ATPase_F1/V1/A1_a/bsu_N"/>
</dbReference>
<dbReference type="InterPro" id="IPR036121">
    <property type="entry name" value="ATPase_F1/V1/A1_a/bsu_N_sf"/>
</dbReference>
<dbReference type="InterPro" id="IPR000194">
    <property type="entry name" value="ATPase_F1/V1/A1_a/bsu_nucl-bd"/>
</dbReference>
<dbReference type="InterPro" id="IPR024034">
    <property type="entry name" value="ATPase_F1/V1_b/a_C"/>
</dbReference>
<dbReference type="InterPro" id="IPR027417">
    <property type="entry name" value="P-loop_NTPase"/>
</dbReference>
<dbReference type="NCBIfam" id="TIGR01039">
    <property type="entry name" value="atpD"/>
    <property type="match status" value="1"/>
</dbReference>
<dbReference type="PANTHER" id="PTHR15184">
    <property type="entry name" value="ATP SYNTHASE"/>
    <property type="match status" value="1"/>
</dbReference>
<dbReference type="PANTHER" id="PTHR15184:SF71">
    <property type="entry name" value="ATP SYNTHASE SUBUNIT BETA, MITOCHONDRIAL"/>
    <property type="match status" value="1"/>
</dbReference>
<dbReference type="Pfam" id="PF00006">
    <property type="entry name" value="ATP-synt_ab"/>
    <property type="match status" value="1"/>
</dbReference>
<dbReference type="Pfam" id="PF02874">
    <property type="entry name" value="ATP-synt_ab_N"/>
    <property type="match status" value="1"/>
</dbReference>
<dbReference type="Pfam" id="PF22919">
    <property type="entry name" value="ATP-synt_VA_C"/>
    <property type="match status" value="1"/>
</dbReference>
<dbReference type="PIRSF" id="PIRSF039072">
    <property type="entry name" value="ATPase_subunit_beta"/>
    <property type="match status" value="1"/>
</dbReference>
<dbReference type="SMART" id="SM00382">
    <property type="entry name" value="AAA"/>
    <property type="match status" value="1"/>
</dbReference>
<dbReference type="SUPFAM" id="SSF47917">
    <property type="entry name" value="C-terminal domain of alpha and beta subunits of F1 ATP synthase"/>
    <property type="match status" value="1"/>
</dbReference>
<dbReference type="SUPFAM" id="SSF50615">
    <property type="entry name" value="N-terminal domain of alpha and beta subunits of F1 ATP synthase"/>
    <property type="match status" value="1"/>
</dbReference>
<dbReference type="SUPFAM" id="SSF52540">
    <property type="entry name" value="P-loop containing nucleoside triphosphate hydrolases"/>
    <property type="match status" value="1"/>
</dbReference>
<dbReference type="PROSITE" id="PS00152">
    <property type="entry name" value="ATPASE_ALPHA_BETA"/>
    <property type="match status" value="1"/>
</dbReference>
<gene>
    <name evidence="1" type="primary">atpD1</name>
    <name type="ordered locus">Rsph17029_0974</name>
</gene>
<organism>
    <name type="scientific">Cereibacter sphaeroides (strain ATCC 17029 / ATH 2.4.9)</name>
    <name type="common">Rhodobacter sphaeroides</name>
    <dbReference type="NCBI Taxonomy" id="349101"/>
    <lineage>
        <taxon>Bacteria</taxon>
        <taxon>Pseudomonadati</taxon>
        <taxon>Pseudomonadota</taxon>
        <taxon>Alphaproteobacteria</taxon>
        <taxon>Rhodobacterales</taxon>
        <taxon>Paracoccaceae</taxon>
        <taxon>Cereibacter</taxon>
    </lineage>
</organism>
<evidence type="ECO:0000255" key="1">
    <source>
        <dbReference type="HAMAP-Rule" id="MF_01347"/>
    </source>
</evidence>